<protein>
    <recommendedName>
        <fullName evidence="1">Transcriptional repressor NrdR</fullName>
    </recommendedName>
</protein>
<sequence>MHCPFCAAVDTKVIDSRLVSDGSQVRRRRQCLDCNERFTTFEVAELVLPRVIKSDEVREPFNEEKLRRGMLKALEKRPVSSDDVETAISHIKSQLRATGEREVPTKMVGNLVMEALKRLDKVAYIRFASVYRSFEDVREFGEEIARLQD</sequence>
<comment type="function">
    <text evidence="1">Negatively regulates transcription of bacterial ribonucleotide reductase nrd genes and operons by binding to NrdR-boxes.</text>
</comment>
<comment type="cofactor">
    <cofactor evidence="1">
        <name>Zn(2+)</name>
        <dbReference type="ChEBI" id="CHEBI:29105"/>
    </cofactor>
    <text evidence="1">Binds 1 zinc ion.</text>
</comment>
<comment type="similarity">
    <text evidence="1">Belongs to the NrdR family.</text>
</comment>
<accession>B2K6T1</accession>
<name>NRDR_YERPB</name>
<dbReference type="EMBL" id="CP001048">
    <property type="protein sequence ID" value="ACC87955.1"/>
    <property type="molecule type" value="Genomic_DNA"/>
</dbReference>
<dbReference type="RefSeq" id="WP_002208668.1">
    <property type="nucleotide sequence ID" value="NZ_CP009780.1"/>
</dbReference>
<dbReference type="SMR" id="B2K6T1"/>
<dbReference type="GeneID" id="57975529"/>
<dbReference type="KEGG" id="ypb:YPTS_0974"/>
<dbReference type="PATRIC" id="fig|502801.10.peg.315"/>
<dbReference type="GO" id="GO:0005524">
    <property type="term" value="F:ATP binding"/>
    <property type="evidence" value="ECO:0007669"/>
    <property type="project" value="UniProtKB-KW"/>
</dbReference>
<dbReference type="GO" id="GO:0003677">
    <property type="term" value="F:DNA binding"/>
    <property type="evidence" value="ECO:0007669"/>
    <property type="project" value="UniProtKB-KW"/>
</dbReference>
<dbReference type="GO" id="GO:0008270">
    <property type="term" value="F:zinc ion binding"/>
    <property type="evidence" value="ECO:0007669"/>
    <property type="project" value="UniProtKB-UniRule"/>
</dbReference>
<dbReference type="GO" id="GO:0045892">
    <property type="term" value="P:negative regulation of DNA-templated transcription"/>
    <property type="evidence" value="ECO:0007669"/>
    <property type="project" value="UniProtKB-UniRule"/>
</dbReference>
<dbReference type="HAMAP" id="MF_00440">
    <property type="entry name" value="NrdR"/>
    <property type="match status" value="1"/>
</dbReference>
<dbReference type="InterPro" id="IPR005144">
    <property type="entry name" value="ATP-cone_dom"/>
</dbReference>
<dbReference type="InterPro" id="IPR055173">
    <property type="entry name" value="NrdR-like_N"/>
</dbReference>
<dbReference type="InterPro" id="IPR003796">
    <property type="entry name" value="RNR_NrdR-like"/>
</dbReference>
<dbReference type="NCBIfam" id="TIGR00244">
    <property type="entry name" value="transcriptional regulator NrdR"/>
    <property type="match status" value="1"/>
</dbReference>
<dbReference type="PANTHER" id="PTHR30455">
    <property type="entry name" value="TRANSCRIPTIONAL REPRESSOR NRDR"/>
    <property type="match status" value="1"/>
</dbReference>
<dbReference type="PANTHER" id="PTHR30455:SF2">
    <property type="entry name" value="TRANSCRIPTIONAL REPRESSOR NRDR"/>
    <property type="match status" value="1"/>
</dbReference>
<dbReference type="Pfam" id="PF03477">
    <property type="entry name" value="ATP-cone"/>
    <property type="match status" value="1"/>
</dbReference>
<dbReference type="Pfam" id="PF22811">
    <property type="entry name" value="Zn_ribbon_NrdR"/>
    <property type="match status" value="1"/>
</dbReference>
<dbReference type="PROSITE" id="PS51161">
    <property type="entry name" value="ATP_CONE"/>
    <property type="match status" value="1"/>
</dbReference>
<gene>
    <name evidence="1" type="primary">nrdR</name>
    <name type="ordered locus">YPTS_0974</name>
</gene>
<reference key="1">
    <citation type="submission" date="2008-04" db="EMBL/GenBank/DDBJ databases">
        <title>Complete sequence of Yersinia pseudotuberculosis PB1/+.</title>
        <authorList>
            <person name="Copeland A."/>
            <person name="Lucas S."/>
            <person name="Lapidus A."/>
            <person name="Glavina del Rio T."/>
            <person name="Dalin E."/>
            <person name="Tice H."/>
            <person name="Bruce D."/>
            <person name="Goodwin L."/>
            <person name="Pitluck S."/>
            <person name="Munk A.C."/>
            <person name="Brettin T."/>
            <person name="Detter J.C."/>
            <person name="Han C."/>
            <person name="Tapia R."/>
            <person name="Schmutz J."/>
            <person name="Larimer F."/>
            <person name="Land M."/>
            <person name="Hauser L."/>
            <person name="Challacombe J.F."/>
            <person name="Green L."/>
            <person name="Lindler L.E."/>
            <person name="Nikolich M.P."/>
            <person name="Richardson P."/>
        </authorList>
    </citation>
    <scope>NUCLEOTIDE SEQUENCE [LARGE SCALE GENOMIC DNA]</scope>
    <source>
        <strain>PB1/+</strain>
    </source>
</reference>
<feature type="chain" id="PRO_1000124568" description="Transcriptional repressor NrdR">
    <location>
        <begin position="1"/>
        <end position="149"/>
    </location>
</feature>
<feature type="domain" description="ATP-cone" evidence="1">
    <location>
        <begin position="49"/>
        <end position="139"/>
    </location>
</feature>
<feature type="zinc finger region" evidence="1">
    <location>
        <begin position="3"/>
        <end position="34"/>
    </location>
</feature>
<organism>
    <name type="scientific">Yersinia pseudotuberculosis serotype IB (strain PB1/+)</name>
    <dbReference type="NCBI Taxonomy" id="502801"/>
    <lineage>
        <taxon>Bacteria</taxon>
        <taxon>Pseudomonadati</taxon>
        <taxon>Pseudomonadota</taxon>
        <taxon>Gammaproteobacteria</taxon>
        <taxon>Enterobacterales</taxon>
        <taxon>Yersiniaceae</taxon>
        <taxon>Yersinia</taxon>
    </lineage>
</organism>
<evidence type="ECO:0000255" key="1">
    <source>
        <dbReference type="HAMAP-Rule" id="MF_00440"/>
    </source>
</evidence>
<proteinExistence type="inferred from homology"/>
<keyword id="KW-0067">ATP-binding</keyword>
<keyword id="KW-0238">DNA-binding</keyword>
<keyword id="KW-0479">Metal-binding</keyword>
<keyword id="KW-0547">Nucleotide-binding</keyword>
<keyword id="KW-0678">Repressor</keyword>
<keyword id="KW-0804">Transcription</keyword>
<keyword id="KW-0805">Transcription regulation</keyword>
<keyword id="KW-0862">Zinc</keyword>
<keyword id="KW-0863">Zinc-finger</keyword>